<keyword id="KW-0007">Acetylation</keyword>
<keyword id="KW-0903">Direct protein sequencing</keyword>
<keyword id="KW-0349">Heme</keyword>
<keyword id="KW-0408">Iron</keyword>
<keyword id="KW-0479">Metal-binding</keyword>
<keyword id="KW-0514">Muscle protein</keyword>
<keyword id="KW-0561">Oxygen transport</keyword>
<keyword id="KW-0813">Transport</keyword>
<reference key="1">
    <citation type="journal article" date="1990" name="J. Protein Chem.">
        <title>Amino acid sequence of myoglobin from the mollusc Bursatella leachii.</title>
        <authorList>
            <person name="Suzuki T."/>
            <person name="Furukohri T."/>
        </authorList>
    </citation>
    <scope>PROTEIN SEQUENCE</scope>
    <scope>SUBUNIT</scope>
    <scope>ACETYLATION AT SER-1</scope>
    <source>
        <tissue>Triturative stomach</tissue>
    </source>
</reference>
<dbReference type="PIR" id="A39023">
    <property type="entry name" value="A39023"/>
</dbReference>
<dbReference type="SMR" id="P29287"/>
<dbReference type="iPTMnet" id="P29287"/>
<dbReference type="GO" id="GO:0005576">
    <property type="term" value="C:extracellular region"/>
    <property type="evidence" value="ECO:0007669"/>
    <property type="project" value="InterPro"/>
</dbReference>
<dbReference type="GO" id="GO:0005833">
    <property type="term" value="C:hemoglobin complex"/>
    <property type="evidence" value="ECO:0007669"/>
    <property type="project" value="InterPro"/>
</dbReference>
<dbReference type="GO" id="GO:0020037">
    <property type="term" value="F:heme binding"/>
    <property type="evidence" value="ECO:0007669"/>
    <property type="project" value="InterPro"/>
</dbReference>
<dbReference type="GO" id="GO:0005506">
    <property type="term" value="F:iron ion binding"/>
    <property type="evidence" value="ECO:0007669"/>
    <property type="project" value="InterPro"/>
</dbReference>
<dbReference type="GO" id="GO:0016491">
    <property type="term" value="F:oxidoreductase activity"/>
    <property type="evidence" value="ECO:0007669"/>
    <property type="project" value="UniProtKB-ARBA"/>
</dbReference>
<dbReference type="GO" id="GO:0019825">
    <property type="term" value="F:oxygen binding"/>
    <property type="evidence" value="ECO:0007669"/>
    <property type="project" value="InterPro"/>
</dbReference>
<dbReference type="GO" id="GO:0005344">
    <property type="term" value="F:oxygen carrier activity"/>
    <property type="evidence" value="ECO:0007669"/>
    <property type="project" value="UniProtKB-KW"/>
</dbReference>
<dbReference type="CDD" id="cd01040">
    <property type="entry name" value="Mb-like"/>
    <property type="match status" value="1"/>
</dbReference>
<dbReference type="Gene3D" id="1.10.490.10">
    <property type="entry name" value="Globins"/>
    <property type="match status" value="1"/>
</dbReference>
<dbReference type="InterPro" id="IPR002336">
    <property type="entry name" value="Erythrocruorin"/>
</dbReference>
<dbReference type="InterPro" id="IPR000971">
    <property type="entry name" value="Globin"/>
</dbReference>
<dbReference type="InterPro" id="IPR009050">
    <property type="entry name" value="Globin-like_sf"/>
</dbReference>
<dbReference type="InterPro" id="IPR012292">
    <property type="entry name" value="Globin/Proto"/>
</dbReference>
<dbReference type="InterPro" id="IPR013314">
    <property type="entry name" value="Globin_lamprey/hagfish"/>
</dbReference>
<dbReference type="InterPro" id="IPR044399">
    <property type="entry name" value="Mb-like_M"/>
</dbReference>
<dbReference type="PANTHER" id="PTHR46783">
    <property type="entry name" value="CYTOGLOBIN"/>
    <property type="match status" value="1"/>
</dbReference>
<dbReference type="PANTHER" id="PTHR46783:SF3">
    <property type="entry name" value="GLOBIN FAMILY PROFILE DOMAIN-CONTAINING PROTEIN"/>
    <property type="match status" value="1"/>
</dbReference>
<dbReference type="Pfam" id="PF00042">
    <property type="entry name" value="Globin"/>
    <property type="match status" value="1"/>
</dbReference>
<dbReference type="PRINTS" id="PR00611">
    <property type="entry name" value="ERYTHCRUORIN"/>
</dbReference>
<dbReference type="SUPFAM" id="SSF46458">
    <property type="entry name" value="Globin-like"/>
    <property type="match status" value="1"/>
</dbReference>
<dbReference type="PROSITE" id="PS01033">
    <property type="entry name" value="GLOBIN"/>
    <property type="match status" value="1"/>
</dbReference>
<accession>P29287</accession>
<proteinExistence type="evidence at protein level"/>
<comment type="subunit">
    <text evidence="2">Monomer.</text>
</comment>
<comment type="miscellaneous">
    <text>This molluscan globin lacks one of the heme-binding histidine residues found in most other globins.</text>
</comment>
<comment type="similarity">
    <text evidence="1">Belongs to the globin family.</text>
</comment>
<name>GLB_BURLE</name>
<feature type="chain" id="PRO_0000052476" description="Globin">
    <location>
        <begin position="1"/>
        <end position="146"/>
    </location>
</feature>
<feature type="domain" description="Globin" evidence="1">
    <location>
        <begin position="1"/>
        <end position="146"/>
    </location>
</feature>
<feature type="binding site" description="proximal binding residue" evidence="1">
    <location>
        <position position="95"/>
    </location>
    <ligand>
        <name>heme b</name>
        <dbReference type="ChEBI" id="CHEBI:60344"/>
    </ligand>
    <ligandPart>
        <name>Fe</name>
        <dbReference type="ChEBI" id="CHEBI:18248"/>
    </ligandPart>
</feature>
<feature type="modified residue" description="N-acetylserine" evidence="2">
    <location>
        <position position="1"/>
    </location>
</feature>
<organism>
    <name type="scientific">Bursatella leachii</name>
    <name type="common">Ragged sea hare</name>
    <dbReference type="NCBI Taxonomy" id="6508"/>
    <lineage>
        <taxon>Eukaryota</taxon>
        <taxon>Metazoa</taxon>
        <taxon>Spiralia</taxon>
        <taxon>Lophotrochozoa</taxon>
        <taxon>Mollusca</taxon>
        <taxon>Gastropoda</taxon>
        <taxon>Heterobranchia</taxon>
        <taxon>Euthyneura</taxon>
        <taxon>Tectipleura</taxon>
        <taxon>Aplysiida</taxon>
        <taxon>Aplysioidea</taxon>
        <taxon>Aplysiidae</taxon>
        <taxon>Bursatella</taxon>
    </lineage>
</organism>
<sequence length="146" mass="15360">SLSGAEADLLAKSWAPVFANKDANGDNFLIALFEAFPDSANFFGDFKGKSIADIRASPKLRSVSSRIVNRLNDFVGNAADAGKMAGMLDQFSKEHVGFGVGSQQFENVRSMFPGFVSSVAAPPAGADAAWGKLFGLIIDALKKAGK</sequence>
<protein>
    <recommendedName>
        <fullName>Globin</fullName>
    </recommendedName>
    <alternativeName>
        <fullName>Myoglobin</fullName>
    </alternativeName>
</protein>
<evidence type="ECO:0000255" key="1">
    <source>
        <dbReference type="PROSITE-ProRule" id="PRU00238"/>
    </source>
</evidence>
<evidence type="ECO:0000269" key="2">
    <source>
    </source>
</evidence>